<dbReference type="EC" id="2.8.4.1" evidence="4 6 7 9"/>
<dbReference type="EMBL" id="X07794">
    <property type="protein sequence ID" value="CAA30638.1"/>
    <property type="molecule type" value="Genomic_DNA"/>
</dbReference>
<dbReference type="EMBL" id="CP001710">
    <property type="protein sequence ID" value="ADL59128.1"/>
    <property type="molecule type" value="Genomic_DNA"/>
</dbReference>
<dbReference type="RefSeq" id="WP_013296338.1">
    <property type="nucleotide sequence ID" value="NC_014408.1"/>
</dbReference>
<dbReference type="PDB" id="1HBM">
    <property type="method" value="X-ray"/>
    <property type="resolution" value="1.80 A"/>
    <property type="chains" value="C/F=2-249"/>
</dbReference>
<dbReference type="PDB" id="1HBN">
    <property type="method" value="X-ray"/>
    <property type="resolution" value="1.16 A"/>
    <property type="chains" value="C/F=2-249"/>
</dbReference>
<dbReference type="PDB" id="1HBO">
    <property type="method" value="X-ray"/>
    <property type="resolution" value="1.78 A"/>
    <property type="chains" value="C/F=2-249"/>
</dbReference>
<dbReference type="PDB" id="1HBU">
    <property type="method" value="X-ray"/>
    <property type="resolution" value="1.90 A"/>
    <property type="chains" value="C/F=2-249"/>
</dbReference>
<dbReference type="PDB" id="1MRO">
    <property type="method" value="X-ray"/>
    <property type="resolution" value="1.16 A"/>
    <property type="chains" value="C/F=2-248"/>
</dbReference>
<dbReference type="PDB" id="3M1V">
    <property type="method" value="X-ray"/>
    <property type="resolution" value="1.45 A"/>
    <property type="chains" value="C/F=2-249"/>
</dbReference>
<dbReference type="PDB" id="3M2R">
    <property type="method" value="X-ray"/>
    <property type="resolution" value="1.30 A"/>
    <property type="chains" value="C/F=2-249"/>
</dbReference>
<dbReference type="PDB" id="3M2U">
    <property type="method" value="X-ray"/>
    <property type="resolution" value="1.40 A"/>
    <property type="chains" value="C/F=2-249"/>
</dbReference>
<dbReference type="PDB" id="3M2V">
    <property type="method" value="X-ray"/>
    <property type="resolution" value="1.80 A"/>
    <property type="chains" value="C/F=2-249"/>
</dbReference>
<dbReference type="PDB" id="3M30">
    <property type="method" value="X-ray"/>
    <property type="resolution" value="1.45 A"/>
    <property type="chains" value="C/F=2-249"/>
</dbReference>
<dbReference type="PDB" id="3M32">
    <property type="method" value="X-ray"/>
    <property type="resolution" value="1.35 A"/>
    <property type="chains" value="C/F=2-249"/>
</dbReference>
<dbReference type="PDB" id="3POT">
    <property type="method" value="X-ray"/>
    <property type="resolution" value="1.20 A"/>
    <property type="chains" value="C/F=1-249"/>
</dbReference>
<dbReference type="PDB" id="5A0Y">
    <property type="method" value="X-ray"/>
    <property type="resolution" value="1.10 A"/>
    <property type="chains" value="C/F=1-249"/>
</dbReference>
<dbReference type="PDB" id="5G0R">
    <property type="method" value="X-ray"/>
    <property type="resolution" value="1.25 A"/>
    <property type="chains" value="C/F=1-249"/>
</dbReference>
<dbReference type="PDB" id="7B2H">
    <property type="method" value="X-ray"/>
    <property type="resolution" value="2.12 A"/>
    <property type="chains" value="C/F=1-249"/>
</dbReference>
<dbReference type="PDB" id="7SUC">
    <property type="method" value="X-ray"/>
    <property type="resolution" value="1.90 A"/>
    <property type="chains" value="C/c=2-247"/>
</dbReference>
<dbReference type="PDB" id="7SXM">
    <property type="method" value="X-ray"/>
    <property type="resolution" value="2.50 A"/>
    <property type="chains" value="C/F=2-247"/>
</dbReference>
<dbReference type="PDBsum" id="1HBM"/>
<dbReference type="PDBsum" id="1HBN"/>
<dbReference type="PDBsum" id="1HBO"/>
<dbReference type="PDBsum" id="1HBU"/>
<dbReference type="PDBsum" id="1MRO"/>
<dbReference type="PDBsum" id="3M1V"/>
<dbReference type="PDBsum" id="3M2R"/>
<dbReference type="PDBsum" id="3M2U"/>
<dbReference type="PDBsum" id="3M2V"/>
<dbReference type="PDBsum" id="3M30"/>
<dbReference type="PDBsum" id="3M32"/>
<dbReference type="PDBsum" id="3POT"/>
<dbReference type="PDBsum" id="5A0Y"/>
<dbReference type="PDBsum" id="5G0R"/>
<dbReference type="PDBsum" id="7B2H"/>
<dbReference type="PDBsum" id="7SUC"/>
<dbReference type="PDBsum" id="7SXM"/>
<dbReference type="SMR" id="P11562"/>
<dbReference type="STRING" id="79929.MTBMA_c15490"/>
<dbReference type="PaxDb" id="79929-MTBMA_c15490"/>
<dbReference type="GeneID" id="77400320"/>
<dbReference type="GeneID" id="9705258"/>
<dbReference type="KEGG" id="mmg:MTBMA_c15490"/>
<dbReference type="PATRIC" id="fig|79929.8.peg.1502"/>
<dbReference type="HOGENOM" id="CLU_1092436_0_0_2"/>
<dbReference type="OrthoDB" id="52520at2157"/>
<dbReference type="BRENDA" id="2.8.4.1">
    <property type="organism ID" value="7427"/>
</dbReference>
<dbReference type="UniPathway" id="UPA00646">
    <property type="reaction ID" value="UER00699"/>
</dbReference>
<dbReference type="EvolutionaryTrace" id="P11562"/>
<dbReference type="Proteomes" id="UP000000345">
    <property type="component" value="Chromosome"/>
</dbReference>
<dbReference type="GO" id="GO:0005737">
    <property type="term" value="C:cytoplasm"/>
    <property type="evidence" value="ECO:0007669"/>
    <property type="project" value="UniProtKB-SubCell"/>
</dbReference>
<dbReference type="GO" id="GO:0050524">
    <property type="term" value="F:coenzyme-B sulfoethylthiotransferase activity"/>
    <property type="evidence" value="ECO:0000314"/>
    <property type="project" value="MENGO"/>
</dbReference>
<dbReference type="GO" id="GO:0015948">
    <property type="term" value="P:methanogenesis"/>
    <property type="evidence" value="ECO:0007669"/>
    <property type="project" value="UniProtKB-KW"/>
</dbReference>
<dbReference type="CDD" id="cd00539">
    <property type="entry name" value="MCR_gamma"/>
    <property type="match status" value="1"/>
</dbReference>
<dbReference type="FunFam" id="3.90.320.20:FF:000001">
    <property type="entry name" value="Methyl-coenzyme M reductase I subunit gamma"/>
    <property type="match status" value="1"/>
</dbReference>
<dbReference type="Gene3D" id="3.90.320.20">
    <property type="entry name" value="Methyl-coenzyme M reductase, gamma subunit"/>
    <property type="match status" value="1"/>
</dbReference>
<dbReference type="InterPro" id="IPR009024">
    <property type="entry name" value="Me_CoM_Rdtase_Fd-like_fold"/>
</dbReference>
<dbReference type="InterPro" id="IPR003178">
    <property type="entry name" value="Me_CoM_Rdtase_gsu"/>
</dbReference>
<dbReference type="InterPro" id="IPR036994">
    <property type="entry name" value="Me_CoM_Rdtase_gsu_sf"/>
</dbReference>
<dbReference type="NCBIfam" id="TIGR03259">
    <property type="entry name" value="met_CoM_red_gam"/>
    <property type="match status" value="1"/>
</dbReference>
<dbReference type="Pfam" id="PF02240">
    <property type="entry name" value="MCR_gamma"/>
    <property type="match status" value="1"/>
</dbReference>
<dbReference type="PIRSF" id="PIRSF000264">
    <property type="entry name" value="Meth_CoM_rd_gama"/>
    <property type="match status" value="1"/>
</dbReference>
<dbReference type="SUPFAM" id="SSF55088">
    <property type="entry name" value="Methyl-coenzyme M reductase subunits"/>
    <property type="match status" value="1"/>
</dbReference>
<accession>P11562</accession>
<accession>D9PY30</accession>
<gene>
    <name type="primary">mcrG</name>
    <name type="ordered locus">MTBMA_c15490</name>
</gene>
<feature type="initiator methionine" description="Removed" evidence="4">
    <location>
        <position position="1"/>
    </location>
</feature>
<feature type="chain" id="PRO_0000147479" description="Methyl-coenzyme M reductase I subunit gamma">
    <location>
        <begin position="2"/>
        <end position="249"/>
    </location>
</feature>
<feature type="binding site" evidence="1 2 3 8 16 20 26 27">
    <location>
        <position position="120"/>
    </location>
    <ligand>
        <name>coenzyme M</name>
        <dbReference type="ChEBI" id="CHEBI:58319"/>
    </ligand>
</feature>
<feature type="helix" evidence="29">
    <location>
        <begin position="10"/>
        <end position="19"/>
    </location>
</feature>
<feature type="helix" evidence="29">
    <location>
        <begin position="33"/>
        <end position="40"/>
    </location>
</feature>
<feature type="strand" evidence="29">
    <location>
        <begin position="51"/>
        <end position="53"/>
    </location>
</feature>
<feature type="helix" evidence="29">
    <location>
        <begin position="56"/>
        <end position="58"/>
    </location>
</feature>
<feature type="helix" evidence="29">
    <location>
        <begin position="65"/>
        <end position="69"/>
    </location>
</feature>
<feature type="helix" evidence="29">
    <location>
        <begin position="74"/>
        <end position="78"/>
    </location>
</feature>
<feature type="strand" evidence="29">
    <location>
        <begin position="82"/>
        <end position="89"/>
    </location>
</feature>
<feature type="turn" evidence="29">
    <location>
        <begin position="91"/>
        <end position="93"/>
    </location>
</feature>
<feature type="helix" evidence="29">
    <location>
        <begin position="98"/>
        <end position="108"/>
    </location>
</feature>
<feature type="strand" evidence="29">
    <location>
        <begin position="113"/>
        <end position="116"/>
    </location>
</feature>
<feature type="strand" evidence="29">
    <location>
        <begin position="121"/>
        <end position="126"/>
    </location>
</feature>
<feature type="helix" evidence="29">
    <location>
        <begin position="127"/>
        <end position="139"/>
    </location>
</feature>
<feature type="turn" evidence="29">
    <location>
        <begin position="145"/>
        <end position="147"/>
    </location>
</feature>
<feature type="strand" evidence="29">
    <location>
        <begin position="148"/>
        <end position="150"/>
    </location>
</feature>
<feature type="turn" evidence="30">
    <location>
        <begin position="156"/>
        <end position="159"/>
    </location>
</feature>
<feature type="strand" evidence="29">
    <location>
        <begin position="175"/>
        <end position="177"/>
    </location>
</feature>
<feature type="turn" evidence="29">
    <location>
        <begin position="179"/>
        <end position="181"/>
    </location>
</feature>
<feature type="strand" evidence="29">
    <location>
        <begin position="184"/>
        <end position="188"/>
    </location>
</feature>
<feature type="strand" evidence="29">
    <location>
        <begin position="194"/>
        <end position="200"/>
    </location>
</feature>
<feature type="helix" evidence="29">
    <location>
        <begin position="207"/>
        <end position="213"/>
    </location>
</feature>
<feature type="helix" evidence="29">
    <location>
        <begin position="224"/>
        <end position="226"/>
    </location>
</feature>
<feature type="helix" evidence="29">
    <location>
        <begin position="228"/>
        <end position="247"/>
    </location>
</feature>
<proteinExistence type="evidence at protein level"/>
<protein>
    <recommendedName>
        <fullName evidence="12">Methyl-coenzyme M reductase I subunit gamma</fullName>
        <shortName evidence="12">MCR I gamma</shortName>
        <ecNumber evidence="4 6 7 9">2.8.4.1</ecNumber>
    </recommendedName>
    <alternativeName>
        <fullName>Coenzyme-B sulfoethylthiotransferase gamma</fullName>
    </alternativeName>
</protein>
<keyword id="KW-0002">3D-structure</keyword>
<keyword id="KW-0963">Cytoplasm</keyword>
<keyword id="KW-0903">Direct protein sequencing</keyword>
<keyword id="KW-0484">Methanogenesis</keyword>
<keyword id="KW-0808">Transferase</keyword>
<organism>
    <name type="scientific">Methanothermobacter marburgensis (strain ATCC BAA-927 / DSM 2133 / JCM 14651 / NBRC 100331 / OCM 82 / Marburg)</name>
    <name type="common">Methanobacterium thermoautotrophicum</name>
    <dbReference type="NCBI Taxonomy" id="79929"/>
    <lineage>
        <taxon>Archaea</taxon>
        <taxon>Methanobacteriati</taxon>
        <taxon>Methanobacteriota</taxon>
        <taxon>Methanomada group</taxon>
        <taxon>Methanobacteria</taxon>
        <taxon>Methanobacteriales</taxon>
        <taxon>Methanobacteriaceae</taxon>
        <taxon>Methanothermobacter</taxon>
    </lineage>
</organism>
<evidence type="ECO:0000269" key="1">
    <source>
    </source>
</evidence>
<evidence type="ECO:0000269" key="2">
    <source>
    </source>
</evidence>
<evidence type="ECO:0000269" key="3">
    <source>
    </source>
</evidence>
<evidence type="ECO:0000269" key="4">
    <source>
    </source>
</evidence>
<evidence type="ECO:0000269" key="5">
    <source>
    </source>
</evidence>
<evidence type="ECO:0000269" key="6">
    <source>
    </source>
</evidence>
<evidence type="ECO:0000269" key="7">
    <source>
    </source>
</evidence>
<evidence type="ECO:0000269" key="8">
    <source>
    </source>
</evidence>
<evidence type="ECO:0000269" key="9">
    <source>
    </source>
</evidence>
<evidence type="ECO:0000269" key="10">
    <source>
    </source>
</evidence>
<evidence type="ECO:0000269" key="11">
    <source>
    </source>
</evidence>
<evidence type="ECO:0000303" key="12">
    <source>
    </source>
</evidence>
<evidence type="ECO:0000305" key="13"/>
<evidence type="ECO:0000305" key="14">
    <source>
    </source>
</evidence>
<evidence type="ECO:0007744" key="15">
    <source>
        <dbReference type="PDB" id="1HBM"/>
    </source>
</evidence>
<evidence type="ECO:0007744" key="16">
    <source>
        <dbReference type="PDB" id="1HBN"/>
    </source>
</evidence>
<evidence type="ECO:0007744" key="17">
    <source>
        <dbReference type="PDB" id="1HBO"/>
    </source>
</evidence>
<evidence type="ECO:0007744" key="18">
    <source>
        <dbReference type="PDB" id="1HBU"/>
    </source>
</evidence>
<evidence type="ECO:0007744" key="19">
    <source>
        <dbReference type="PDB" id="1MRO"/>
    </source>
</evidence>
<evidence type="ECO:0007744" key="20">
    <source>
        <dbReference type="PDB" id="3M1V"/>
    </source>
</evidence>
<evidence type="ECO:0007744" key="21">
    <source>
        <dbReference type="PDB" id="3M2R"/>
    </source>
</evidence>
<evidence type="ECO:0007744" key="22">
    <source>
        <dbReference type="PDB" id="3M2U"/>
    </source>
</evidence>
<evidence type="ECO:0007744" key="23">
    <source>
        <dbReference type="PDB" id="3M2V"/>
    </source>
</evidence>
<evidence type="ECO:0007744" key="24">
    <source>
        <dbReference type="PDB" id="3M30"/>
    </source>
</evidence>
<evidence type="ECO:0007744" key="25">
    <source>
        <dbReference type="PDB" id="3M32"/>
    </source>
</evidence>
<evidence type="ECO:0007744" key="26">
    <source>
        <dbReference type="PDB" id="3POT"/>
    </source>
</evidence>
<evidence type="ECO:0007744" key="27">
    <source>
        <dbReference type="PDB" id="5A0Y"/>
    </source>
</evidence>
<evidence type="ECO:0007744" key="28">
    <source>
        <dbReference type="PDB" id="5G0R"/>
    </source>
</evidence>
<evidence type="ECO:0007829" key="29">
    <source>
        <dbReference type="PDB" id="5A0Y"/>
    </source>
</evidence>
<evidence type="ECO:0007829" key="30">
    <source>
        <dbReference type="PDB" id="7B2H"/>
    </source>
</evidence>
<comment type="function">
    <text evidence="4 9">Component of the methyl-coenzyme M reductase (MCR) I that catalyzes the reductive cleavage of methyl-coenzyme M (CoM-S-CH3 or 2-(methylthio)ethanesulfonate) using coenzyme B (CoB or 7-mercaptoheptanoylthreonine phosphate) as reductant which results in the production of methane and the mixed heterodisulfide of CoB and CoM (CoM-S-S-CoB). This is the final step in methanogenesis (PubMed:2269306, PubMed:3350018). Neither N-6-mercaptohexanoylthreonine phosphate (H-S-HxoTP) nor N-8-mercaptooctanoylthreonine phosphate (H-SOcoTP) nor any other thiol compound such as CoA or CoM can substitute for CoB as the electron donor (PubMed:3350018).</text>
</comment>
<comment type="catalytic activity">
    <reaction evidence="4 6 7 9">
        <text>coenzyme B + methyl-coenzyme M = methane + coenzyme M-coenzyme B heterodisulfide</text>
        <dbReference type="Rhea" id="RHEA:12532"/>
        <dbReference type="ChEBI" id="CHEBI:16183"/>
        <dbReference type="ChEBI" id="CHEBI:58286"/>
        <dbReference type="ChEBI" id="CHEBI:58411"/>
        <dbReference type="ChEBI" id="CHEBI:58596"/>
        <dbReference type="EC" id="2.8.4.1"/>
    </reaction>
    <physiologicalReaction direction="left-to-right" evidence="7 14">
        <dbReference type="Rhea" id="RHEA:12533"/>
    </physiologicalReaction>
</comment>
<comment type="cofactor">
    <cofactor evidence="9 10 11">
        <name>coenzyme F430</name>
        <dbReference type="ChEBI" id="CHEBI:60540"/>
    </cofactor>
    <text evidence="9 10 11">Binds 2 coenzyme F430 non-covalently per MCR complex. Coenzyme F430 is a yellow nickel porphinoid (PubMed:3350018, PubMed:9367957). Methyl-coenzyme-M reductase is activated when the enzyme-bound coenzyme F430 is reduced to the Ni(I) oxidation state (PubMed:9030728).</text>
</comment>
<comment type="activity regulation">
    <text evidence="7 9">Methyl-coenzyme M reductase activity is inhibited by 3-nitrooxypropanol (3-NOP) in vitro and in vivo, by oxidation of its active site Ni(I), which stops both growth and methanogenesis (PubMed:27140643). Is also inhibited by the reaction product CoM-S-S-CoB (PubMed:3350018).</text>
</comment>
<comment type="pathway">
    <text evidence="7 9">One-carbon metabolism; methyl-coenzyme M reduction; methane from methyl-coenzyme M: step 1/1.</text>
</comment>
<comment type="subunit">
    <text evidence="4 9 11">MCR is a hexamer of two alpha, two beta, and two gamma chains, forming a dimer of heterotrimers.</text>
</comment>
<comment type="subcellular location">
    <subcellularLocation>
        <location evidence="5">Cytoplasm</location>
    </subcellularLocation>
    <text evidence="5">Under growth limiting conditions on nickel-depleted media, a fraction of 70% of the enzyme is localized close to the cytoplasmic membrane, which implies 'facultative' membrane association of the enzyme.</text>
</comment>
<comment type="developmental stage">
    <text evidence="4">There are two MCR complexes in this bacteria. MCR II is expressed in the early growth phase. Late growth cells contain mostly MCR I.</text>
</comment>
<comment type="miscellaneous">
    <text evidence="6">The MCR reaction has been shown to follow an ordered bi-bi ternary complex mechanism, in which methyl-SCoM must enter the MCR active site prior to CoB for a productive catalysis.</text>
</comment>
<comment type="similarity">
    <text evidence="13">Belongs to the methyl-coenzyme M reductase gamma subunit family.</text>
</comment>
<name>MCRG_METTM</name>
<reference key="1">
    <citation type="journal article" date="1988" name="J. Bacteriol.">
        <title>Cloning and characterization of the methyl coenzyme M reductase genes from Methanobacterium thermoautotrophicum.</title>
        <authorList>
            <person name="Bokranz M."/>
            <person name="Baeumner G."/>
            <person name="Allmansberger R."/>
            <person name="Ankel-Fuchs D."/>
            <person name="Klein A."/>
        </authorList>
    </citation>
    <scope>NUCLEOTIDE SEQUENCE [GENOMIC DNA]</scope>
    <source>
        <strain>ATCC BAA-927 / DSM 2133 / JCM 14651 / NBRC 100331 / OCM 82 / Marburg</strain>
    </source>
</reference>
<reference key="2">
    <citation type="journal article" date="2010" name="J. Bacteriol.">
        <title>Complete genome sequence of Methanothermobacter marburgensis, a methanoarchaeon model organism.</title>
        <authorList>
            <person name="Liesegang H."/>
            <person name="Kaster A.K."/>
            <person name="Wiezer A."/>
            <person name="Goenrich M."/>
            <person name="Wollherr A."/>
            <person name="Seedorf H."/>
            <person name="Gottschalk G."/>
            <person name="Thauer R.K."/>
        </authorList>
    </citation>
    <scope>NUCLEOTIDE SEQUENCE [LARGE SCALE GENOMIC DNA]</scope>
    <source>
        <strain>ATCC BAA-927 / DSM 2133 / JCM 14651 / NBRC 100331 / OCM 82 / Marburg</strain>
    </source>
</reference>
<reference key="3">
    <citation type="journal article" date="1990" name="Eur. J. Biochem.">
        <title>Two genetically distinct methyl-coenzyme M reductases in Methanobacterium thermoautotrophicum strain Marburg and delta H.</title>
        <authorList>
            <person name="Rospert S."/>
            <person name="Linder D."/>
            <person name="Ellermann J."/>
            <person name="Thauer R.K."/>
        </authorList>
    </citation>
    <scope>PROTEIN SEQUENCE OF 2-21</scope>
    <scope>FUNCTION</scope>
    <scope>CATALYTIC ACTIVITY</scope>
    <scope>SUBUNIT</scope>
    <scope>DEVELOPMENTAL STAGE</scope>
    <source>
        <strain>ATCC BAA-927 / DSM 2133 / JCM 14651 / NBRC 100331 / OCM 82 / Marburg</strain>
    </source>
</reference>
<reference key="4">
    <citation type="journal article" date="1988" name="Eur. J. Biochem.">
        <title>The final step in methane formation. Investigations with highly purified methyl-CoM reductase (component C) from Methanobacterium thermoautotrophicum (strain Marburg).</title>
        <authorList>
            <person name="Ellermann J."/>
            <person name="Hedderich R."/>
            <person name="Boecher R."/>
            <person name="Thauer R.K."/>
        </authorList>
    </citation>
    <scope>FUNCTION</scope>
    <scope>CATALYTIC ACTIVITY</scope>
    <scope>SUBSTRATE SPECIFICITY</scope>
    <scope>COFACTOR</scope>
    <scope>ACTIVITY REGULATION</scope>
    <scope>PATHWAY</scope>
    <scope>SUBUNIT</scope>
    <source>
        <strain>ATCC BAA-927 / DSM 2133 / JCM 14651 / NBRC 100331 / OCM 82 / Marburg</strain>
    </source>
</reference>
<reference key="5">
    <citation type="journal article" date="1997" name="Eur. J. Biochem.">
        <title>Purified methyl-coenzyme-M reductase is activated when the enzyme-bound coenzyme F430 is reduced to the nickel(I) oxidation state by titanium(III) citrate.</title>
        <authorList>
            <person name="Goubeaud M."/>
            <person name="Schreiner G."/>
            <person name="Thauer R.K."/>
        </authorList>
    </citation>
    <scope>COFACTOR</scope>
    <source>
        <strain>ATCC BAA-927 / DSM 2133 / JCM 14651 / NBRC 100331 / OCM 82 / Marburg</strain>
    </source>
</reference>
<reference key="6">
    <citation type="journal article" date="2013" name="Archaea">
        <title>Localization of methyl-Coenzyme M reductase as metabolic marker for diverse methanogenic Archaea.</title>
        <authorList>
            <person name="Wrede C."/>
            <person name="Walbaum U."/>
            <person name="Ducki A."/>
            <person name="Heieren I."/>
            <person name="Hoppert M."/>
        </authorList>
    </citation>
    <scope>SUBCELLULAR LOCATION</scope>
    <source>
        <strain>ATCC BAA-927 / DSM 2133 / JCM 14651 / NBRC 100331 / OCM 82 / Marburg</strain>
    </source>
</reference>
<reference key="7">
    <citation type="journal article" date="2015" name="J. Biol. Chem.">
        <title>The reaction mechanism of methyl-coenzyme M reductase: how an enzyme enforces strict binding order.</title>
        <authorList>
            <person name="Wongnate T."/>
            <person name="Ragsdale S.W."/>
        </authorList>
    </citation>
    <scope>CATALYTIC ACTIVITY</scope>
    <scope>REACTION MECHANISM</scope>
    <source>
        <strain>ATCC BAA-927 / DSM 2133 / JCM 14651 / NBRC 100331 / OCM 82 / Marburg</strain>
    </source>
</reference>
<reference evidence="19" key="8">
    <citation type="journal article" date="1997" name="Science">
        <title>Crystal structure of methyl-coenzyme M reductase: the key enzyme of biological methane formation.</title>
        <authorList>
            <person name="Ermler U."/>
            <person name="Grabarse W."/>
            <person name="Shima S."/>
            <person name="Goubeaud M."/>
            <person name="Thauer R.K."/>
        </authorList>
    </citation>
    <scope>X-RAY CRYSTALLOGRAPHY (1.16 ANGSTROMS) OF 2-248 IN COMPLEX WITH COENZYME F430; COENZYME B; COENZYME M AND MCR SUBUNITS ALPHA AND BETA</scope>
    <scope>COFACTOR</scope>
    <scope>SUBUNIT</scope>
    <source>
        <strain>ATCC BAA-927 / DSM 2133 / JCM 14651 / NBRC 100331 / OCM 82 / Marburg</strain>
    </source>
</reference>
<reference evidence="15 16 17 18" key="9">
    <citation type="journal article" date="2001" name="J. Mol. Biol.">
        <title>On the mechanism of biological methane formation: structural evidence for conformational changes in methyl-coenzyme M reductase upon substrate binding.</title>
        <authorList>
            <person name="Grabarse W."/>
            <person name="Mahlert F."/>
            <person name="Duin E.C."/>
            <person name="Goubeaud M."/>
            <person name="Shima S."/>
            <person name="Thauer R.K."/>
            <person name="Lamzin V."/>
            <person name="Ermler U."/>
        </authorList>
    </citation>
    <scope>X-RAY CRYSTALLOGRAPHY (1.16 ANGSTROMS) OF 2-249 IN COMPLEXES WITH COM-S-S-COB; COENZYME B; COENZYME F430; COENZYME M AND MCR SUBUNITS ALPHA AND BETA</scope>
    <source>
        <strain>ATCC BAA-927 / DSM 2133 / JCM 14651 / NBRC 100331 / OCM 82 / Marburg</strain>
    </source>
</reference>
<reference evidence="20 21 22 23 24 25" key="10">
    <citation type="journal article" date="2010" name="Biochemistry">
        <title>Structural insight into methyl-coenzyme M reductase chemistry using coenzyme B analogues.</title>
        <authorList>
            <person name="Cedervall P.E."/>
            <person name="Dey M."/>
            <person name="Pearson A.R."/>
            <person name="Ragsdale S.W."/>
            <person name="Wilmot C.M."/>
        </authorList>
    </citation>
    <scope>X-RAY CRYSTALLOGRAPHY (1.30 ANGSTROMS) OF 2-249 IN COMPLEXES WITH COM-S-S-COB; COENZYME B; COENZYME F430; COENZYME M; COENZYME B ANALOGS AND MCR SUBUNITS ALPHA AND BETA</scope>
    <source>
        <strain>ATCC BAA-927 / DSM 2133 / JCM 14651 / NBRC 100331 / OCM 82 / Marburg</strain>
    </source>
</reference>
<reference evidence="26" key="11">
    <citation type="journal article" date="2011" name="J. Am. Chem. Soc.">
        <title>Structural analysis of a Ni-methyl species in methyl-coenzyme M reductase from Methanothermobacter marburgensis.</title>
        <authorList>
            <person name="Cedervall P.E."/>
            <person name="Dey M."/>
            <person name="Li X."/>
            <person name="Sarangi R."/>
            <person name="Hedman B."/>
            <person name="Ragsdale S.W."/>
            <person name="Wilmot C.M."/>
        </authorList>
    </citation>
    <scope>X-RAY CRYSTALLOGRAPHY (1.20 ANGSTROMS) IN COMPLEX WITH COENZYME F430; COENZYME B; COENZYME M AND MCR SUBUNITS ALPHA AND BETA</scope>
    <source>
        <strain>ATCC BAA-927 / DSM 2133 / JCM 14651 / NBRC 100331 / OCM 82 / Marburg</strain>
    </source>
</reference>
<reference evidence="27" key="12">
    <citation type="journal article" date="2016" name="Angew. Chem. Int. Ed. Engl.">
        <title>Didehydroaspartate Modification in Methyl-CoenzymeM Reductase Catalyzing Methane Formation.</title>
        <authorList>
            <person name="Wagner T."/>
            <person name="Kahnt J."/>
            <person name="Ermler U."/>
            <person name="Shima S."/>
        </authorList>
    </citation>
    <scope>X-RAY CRYSTALLOGRAPHY (1.10 ANGSTROMS) IN COMPLEX WITH COENZYME F430; COENZYME B; COENZYME M AND MCR SUBUNITS ALPHA AND BETA</scope>
    <source>
        <strain>ATCC BAA-927 / DSM 2133 / JCM 14651 / NBRC 100331 / OCM 82 / Marburg</strain>
    </source>
</reference>
<reference evidence="28" key="13">
    <citation type="journal article" date="2016" name="Proc. Natl. Acad. Sci. U.S.A.">
        <title>Mode of action uncovered for the specific reduction of methane emissions from ruminants by the small molecule 3-nitrooxypropanol.</title>
        <authorList>
            <person name="Duin E.C."/>
            <person name="Wagner T."/>
            <person name="Shima S."/>
            <person name="Prakash D."/>
            <person name="Cronin B."/>
            <person name="Yanez-Ruiz D.R."/>
            <person name="Duval S."/>
            <person name="Rumbeli R."/>
            <person name="Stemmler R.T."/>
            <person name="Thauer R.K."/>
            <person name="Kindermann M."/>
        </authorList>
    </citation>
    <scope>X-RAY CRYSTALLOGRAPHY (1.25 ANGSTROMS) IN COMPLEX WITH COENZYME B; COENZYME F430 AND MCR SUBUNITS ALPHA AND BETA</scope>
    <scope>ACTIVITY REGULATION</scope>
    <source>
        <strain>ATCC BAA-927 / DSM 2133 / JCM 14651 / NBRC 100331 / OCM 82 / Marburg</strain>
    </source>
</reference>
<sequence length="249" mass="28758">MAQYYPGTTKVAQNRRNFCNPEYELEKLREISDEDVVKILGHRAPGEEYPSVHPPLEEMDEPEDAIREMVEPIDGAKAGDRVRYIQFTDSMYFAPAQPYVRSRAYLCRYRGADAGTLSGRQIIETRERDLEKISKELLETEFFDPARSGVRGKSVHGHSLRLDEDGMMFDMLRRQIYNKDTGRVEMVKNQIGDELDEPVDLGEPLDEETLMEKTTIYRVDGEAYRDDVEAVEIMQRIHVLRSQGGFNLE</sequence>